<accession>A1V2S9</accession>
<comment type="function">
    <text evidence="1">Catalyzes the synthesis of the hydroxymethylpyrimidine phosphate (HMP-P) moiety of thiamine from aminoimidazole ribotide (AIR) in a radical S-adenosyl-L-methionine (SAM)-dependent reaction.</text>
</comment>
<comment type="catalytic activity">
    <reaction evidence="1">
        <text>5-amino-1-(5-phospho-beta-D-ribosyl)imidazole + S-adenosyl-L-methionine = 4-amino-2-methyl-5-(phosphooxymethyl)pyrimidine + CO + 5'-deoxyadenosine + formate + L-methionine + 3 H(+)</text>
        <dbReference type="Rhea" id="RHEA:24840"/>
        <dbReference type="ChEBI" id="CHEBI:15378"/>
        <dbReference type="ChEBI" id="CHEBI:15740"/>
        <dbReference type="ChEBI" id="CHEBI:17245"/>
        <dbReference type="ChEBI" id="CHEBI:17319"/>
        <dbReference type="ChEBI" id="CHEBI:57844"/>
        <dbReference type="ChEBI" id="CHEBI:58354"/>
        <dbReference type="ChEBI" id="CHEBI:59789"/>
        <dbReference type="ChEBI" id="CHEBI:137981"/>
        <dbReference type="EC" id="4.1.99.17"/>
    </reaction>
</comment>
<comment type="cofactor">
    <cofactor evidence="1">
        <name>[4Fe-4S] cluster</name>
        <dbReference type="ChEBI" id="CHEBI:49883"/>
    </cofactor>
    <text evidence="1">Binds 1 [4Fe-4S] cluster per subunit. The cluster is coordinated with 3 cysteines and an exchangeable S-adenosyl-L-methionine.</text>
</comment>
<comment type="pathway">
    <text evidence="1">Cofactor biosynthesis; thiamine diphosphate biosynthesis.</text>
</comment>
<comment type="subunit">
    <text evidence="1">Homodimer.</text>
</comment>
<comment type="similarity">
    <text evidence="1">Belongs to the ThiC family.</text>
</comment>
<sequence>MNANPKFLSADARVDAAAVAPLPNSRKVYVTGSQPDIRVPMREITQADTPTSFGGEKNPPIYVYDTSGPYTDPDAKIDIRAGLPALRQRWIDARGDTETLSGLTSDYGRERAADPATAELRFPGLHRHPRRAKAGKNVTQMHYARQGIITPEMEYIAIRENQRRAEYLESLKASGPNGAKLAAMMGRQHAGQAFGAAAFGANAPAEITPEFVRDEVARGRAIIPANINHPETEPMIIGRNFLVKINANIGNSAVTSSIGEEVDKMTWAIRWGGDTVMDLSTGKHIHETREWIIRNSPVPIGTVPIYQALEKVNGKAEDLTWEIFRDTLIEQAEQGVDYFTIHAGVRLQYVPLTANRMTGIVSRGGSIMAKWCLAHHKESFLYEHFEEICEIMKAYDVSFSLGDGLRPGSIYDANDEAQLGELKTLGELTQIAWKHDVQVMIEGPGHVPMQLIKENMDLQLDWCKEAPFYTLGPLTTDIAPGYDHITSGIGAAMIGWFGTAMLCYVTPKEHLGLPNKDDVKEGIITYKLAAHAADLAKGHPGAQVRDNALSKARFEFRWQDQFNLGLDPDKAREFHDETLPKDSAKVAHFCSMCGPHFCSMKITQDVREFAAQQGVSENDALKKGMEVKAVEFVKSGSEIYHRQ</sequence>
<protein>
    <recommendedName>
        <fullName evidence="1">Phosphomethylpyrimidine synthase</fullName>
        <ecNumber evidence="1">4.1.99.17</ecNumber>
    </recommendedName>
    <alternativeName>
        <fullName evidence="1">Hydroxymethylpyrimidine phosphate synthase</fullName>
        <shortName evidence="1">HMP-P synthase</shortName>
        <shortName evidence="1">HMP-phosphate synthase</shortName>
        <shortName evidence="1">HMPP synthase</shortName>
    </alternativeName>
    <alternativeName>
        <fullName evidence="1">Thiamine biosynthesis protein ThiC</fullName>
    </alternativeName>
</protein>
<name>THIC_BURMS</name>
<dbReference type="EC" id="4.1.99.17" evidence="1"/>
<dbReference type="EMBL" id="CP000526">
    <property type="protein sequence ID" value="ABM50461.1"/>
    <property type="molecule type" value="Genomic_DNA"/>
</dbReference>
<dbReference type="RefSeq" id="WP_004193963.1">
    <property type="nucleotide sequence ID" value="NC_008785.1"/>
</dbReference>
<dbReference type="SMR" id="A1V2S9"/>
<dbReference type="GeneID" id="92980758"/>
<dbReference type="KEGG" id="bmv:BMASAVP1_A1197"/>
<dbReference type="HOGENOM" id="CLU_013181_2_1_4"/>
<dbReference type="UniPathway" id="UPA00060"/>
<dbReference type="GO" id="GO:0005829">
    <property type="term" value="C:cytosol"/>
    <property type="evidence" value="ECO:0007669"/>
    <property type="project" value="TreeGrafter"/>
</dbReference>
<dbReference type="GO" id="GO:0051539">
    <property type="term" value="F:4 iron, 4 sulfur cluster binding"/>
    <property type="evidence" value="ECO:0007669"/>
    <property type="project" value="UniProtKB-KW"/>
</dbReference>
<dbReference type="GO" id="GO:0016830">
    <property type="term" value="F:carbon-carbon lyase activity"/>
    <property type="evidence" value="ECO:0007669"/>
    <property type="project" value="InterPro"/>
</dbReference>
<dbReference type="GO" id="GO:0008270">
    <property type="term" value="F:zinc ion binding"/>
    <property type="evidence" value="ECO:0007669"/>
    <property type="project" value="UniProtKB-UniRule"/>
</dbReference>
<dbReference type="GO" id="GO:0009228">
    <property type="term" value="P:thiamine biosynthetic process"/>
    <property type="evidence" value="ECO:0007669"/>
    <property type="project" value="UniProtKB-KW"/>
</dbReference>
<dbReference type="GO" id="GO:0009229">
    <property type="term" value="P:thiamine diphosphate biosynthetic process"/>
    <property type="evidence" value="ECO:0007669"/>
    <property type="project" value="UniProtKB-UniRule"/>
</dbReference>
<dbReference type="FunFam" id="3.20.20.540:FF:000001">
    <property type="entry name" value="Phosphomethylpyrimidine synthase"/>
    <property type="match status" value="1"/>
</dbReference>
<dbReference type="Gene3D" id="6.10.250.620">
    <property type="match status" value="1"/>
</dbReference>
<dbReference type="Gene3D" id="3.20.20.540">
    <property type="entry name" value="Radical SAM ThiC family, central domain"/>
    <property type="match status" value="1"/>
</dbReference>
<dbReference type="HAMAP" id="MF_00089">
    <property type="entry name" value="ThiC"/>
    <property type="match status" value="1"/>
</dbReference>
<dbReference type="InterPro" id="IPR037509">
    <property type="entry name" value="ThiC"/>
</dbReference>
<dbReference type="InterPro" id="IPR025747">
    <property type="entry name" value="ThiC-associated_dom"/>
</dbReference>
<dbReference type="InterPro" id="IPR038521">
    <property type="entry name" value="ThiC/Bza_core_dom"/>
</dbReference>
<dbReference type="InterPro" id="IPR002817">
    <property type="entry name" value="ThiC/BzaA/B"/>
</dbReference>
<dbReference type="NCBIfam" id="NF006763">
    <property type="entry name" value="PRK09284.1"/>
    <property type="match status" value="1"/>
</dbReference>
<dbReference type="NCBIfam" id="NF009895">
    <property type="entry name" value="PRK13352.1"/>
    <property type="match status" value="1"/>
</dbReference>
<dbReference type="NCBIfam" id="TIGR00190">
    <property type="entry name" value="thiC"/>
    <property type="match status" value="1"/>
</dbReference>
<dbReference type="PANTHER" id="PTHR30557:SF1">
    <property type="entry name" value="PHOSPHOMETHYLPYRIMIDINE SYNTHASE, CHLOROPLASTIC"/>
    <property type="match status" value="1"/>
</dbReference>
<dbReference type="PANTHER" id="PTHR30557">
    <property type="entry name" value="THIAMINE BIOSYNTHESIS PROTEIN THIC"/>
    <property type="match status" value="1"/>
</dbReference>
<dbReference type="Pfam" id="PF13667">
    <property type="entry name" value="ThiC-associated"/>
    <property type="match status" value="1"/>
</dbReference>
<dbReference type="Pfam" id="PF01964">
    <property type="entry name" value="ThiC_Rad_SAM"/>
    <property type="match status" value="1"/>
</dbReference>
<dbReference type="SFLD" id="SFLDF00407">
    <property type="entry name" value="phosphomethylpyrimidine_syntha"/>
    <property type="match status" value="1"/>
</dbReference>
<dbReference type="SFLD" id="SFLDG01114">
    <property type="entry name" value="phosphomethylpyrimidine_syntha"/>
    <property type="match status" value="1"/>
</dbReference>
<dbReference type="SFLD" id="SFLDS00113">
    <property type="entry name" value="Radical_SAM_Phosphomethylpyrim"/>
    <property type="match status" value="1"/>
</dbReference>
<reference key="1">
    <citation type="journal article" date="2010" name="Genome Biol. Evol.">
        <title>Continuing evolution of Burkholderia mallei through genome reduction and large-scale rearrangements.</title>
        <authorList>
            <person name="Losada L."/>
            <person name="Ronning C.M."/>
            <person name="DeShazer D."/>
            <person name="Woods D."/>
            <person name="Fedorova N."/>
            <person name="Kim H.S."/>
            <person name="Shabalina S.A."/>
            <person name="Pearson T.R."/>
            <person name="Brinkac L."/>
            <person name="Tan P."/>
            <person name="Nandi T."/>
            <person name="Crabtree J."/>
            <person name="Badger J."/>
            <person name="Beckstrom-Sternberg S."/>
            <person name="Saqib M."/>
            <person name="Schutzer S.E."/>
            <person name="Keim P."/>
            <person name="Nierman W.C."/>
        </authorList>
    </citation>
    <scope>NUCLEOTIDE SEQUENCE [LARGE SCALE GENOMIC DNA]</scope>
    <source>
        <strain>SAVP1</strain>
    </source>
</reference>
<gene>
    <name evidence="1" type="primary">thiC</name>
    <name type="ordered locus">BMASAVP1_A1197</name>
</gene>
<feature type="chain" id="PRO_1000004743" description="Phosphomethylpyrimidine synthase">
    <location>
        <begin position="1"/>
        <end position="643"/>
    </location>
</feature>
<feature type="binding site" evidence="1">
    <location>
        <position position="248"/>
    </location>
    <ligand>
        <name>substrate</name>
    </ligand>
</feature>
<feature type="binding site" evidence="1">
    <location>
        <position position="277"/>
    </location>
    <ligand>
        <name>substrate</name>
    </ligand>
</feature>
<feature type="binding site" evidence="1">
    <location>
        <position position="306"/>
    </location>
    <ligand>
        <name>substrate</name>
    </ligand>
</feature>
<feature type="binding site" evidence="1">
    <location>
        <position position="342"/>
    </location>
    <ligand>
        <name>substrate</name>
    </ligand>
</feature>
<feature type="binding site" evidence="1">
    <location>
        <begin position="362"/>
        <end position="364"/>
    </location>
    <ligand>
        <name>substrate</name>
    </ligand>
</feature>
<feature type="binding site" evidence="1">
    <location>
        <begin position="403"/>
        <end position="406"/>
    </location>
    <ligand>
        <name>substrate</name>
    </ligand>
</feature>
<feature type="binding site" evidence="1">
    <location>
        <position position="442"/>
    </location>
    <ligand>
        <name>substrate</name>
    </ligand>
</feature>
<feature type="binding site" evidence="1">
    <location>
        <position position="446"/>
    </location>
    <ligand>
        <name>Zn(2+)</name>
        <dbReference type="ChEBI" id="CHEBI:29105"/>
    </ligand>
</feature>
<feature type="binding site" evidence="1">
    <location>
        <position position="469"/>
    </location>
    <ligand>
        <name>substrate</name>
    </ligand>
</feature>
<feature type="binding site" evidence="1">
    <location>
        <position position="510"/>
    </location>
    <ligand>
        <name>Zn(2+)</name>
        <dbReference type="ChEBI" id="CHEBI:29105"/>
    </ligand>
</feature>
<feature type="binding site" evidence="1">
    <location>
        <position position="590"/>
    </location>
    <ligand>
        <name>[4Fe-4S] cluster</name>
        <dbReference type="ChEBI" id="CHEBI:49883"/>
        <note>4Fe-4S-S-AdoMet</note>
    </ligand>
</feature>
<feature type="binding site" evidence="1">
    <location>
        <position position="593"/>
    </location>
    <ligand>
        <name>[4Fe-4S] cluster</name>
        <dbReference type="ChEBI" id="CHEBI:49883"/>
        <note>4Fe-4S-S-AdoMet</note>
    </ligand>
</feature>
<feature type="binding site" evidence="1">
    <location>
        <position position="598"/>
    </location>
    <ligand>
        <name>[4Fe-4S] cluster</name>
        <dbReference type="ChEBI" id="CHEBI:49883"/>
        <note>4Fe-4S-S-AdoMet</note>
    </ligand>
</feature>
<keyword id="KW-0004">4Fe-4S</keyword>
<keyword id="KW-0408">Iron</keyword>
<keyword id="KW-0411">Iron-sulfur</keyword>
<keyword id="KW-0456">Lyase</keyword>
<keyword id="KW-0479">Metal-binding</keyword>
<keyword id="KW-0949">S-adenosyl-L-methionine</keyword>
<keyword id="KW-0784">Thiamine biosynthesis</keyword>
<keyword id="KW-0862">Zinc</keyword>
<proteinExistence type="inferred from homology"/>
<organism>
    <name type="scientific">Burkholderia mallei (strain SAVP1)</name>
    <dbReference type="NCBI Taxonomy" id="320388"/>
    <lineage>
        <taxon>Bacteria</taxon>
        <taxon>Pseudomonadati</taxon>
        <taxon>Pseudomonadota</taxon>
        <taxon>Betaproteobacteria</taxon>
        <taxon>Burkholderiales</taxon>
        <taxon>Burkholderiaceae</taxon>
        <taxon>Burkholderia</taxon>
        <taxon>pseudomallei group</taxon>
    </lineage>
</organism>
<evidence type="ECO:0000255" key="1">
    <source>
        <dbReference type="HAMAP-Rule" id="MF_00089"/>
    </source>
</evidence>